<gene>
    <name evidence="2" type="ordered locus">SE_0220</name>
</gene>
<name>LCDH_STAES</name>
<proteinExistence type="inferred from homology"/>
<dbReference type="EC" id="1.1.1.108" evidence="1"/>
<dbReference type="EMBL" id="AE015929">
    <property type="protein sequence ID" value="AAO03817.1"/>
    <property type="molecule type" value="Genomic_DNA"/>
</dbReference>
<dbReference type="RefSeq" id="NP_763775.1">
    <property type="nucleotide sequence ID" value="NC_004461.1"/>
</dbReference>
<dbReference type="RefSeq" id="WP_001830516.1">
    <property type="nucleotide sequence ID" value="NZ_WBME01000011.1"/>
</dbReference>
<dbReference type="SMR" id="Q8CQB9"/>
<dbReference type="KEGG" id="sep:SE_0220"/>
<dbReference type="PATRIC" id="fig|176280.10.peg.199"/>
<dbReference type="eggNOG" id="COG1250">
    <property type="taxonomic scope" value="Bacteria"/>
</dbReference>
<dbReference type="HOGENOM" id="CLU_009834_0_1_9"/>
<dbReference type="OrthoDB" id="9815331at2"/>
<dbReference type="UniPathway" id="UPA00117"/>
<dbReference type="Proteomes" id="UP000001411">
    <property type="component" value="Chromosome"/>
</dbReference>
<dbReference type="GO" id="GO:0005737">
    <property type="term" value="C:cytoplasm"/>
    <property type="evidence" value="ECO:0007669"/>
    <property type="project" value="UniProtKB-SubCell"/>
</dbReference>
<dbReference type="GO" id="GO:0047728">
    <property type="term" value="F:carnitine 3-dehydrogenase activity"/>
    <property type="evidence" value="ECO:0007669"/>
    <property type="project" value="UniProtKB-UniRule"/>
</dbReference>
<dbReference type="GO" id="GO:0070403">
    <property type="term" value="F:NAD+ binding"/>
    <property type="evidence" value="ECO:0007669"/>
    <property type="project" value="InterPro"/>
</dbReference>
<dbReference type="GO" id="GO:0009437">
    <property type="term" value="P:carnitine metabolic process"/>
    <property type="evidence" value="ECO:0007669"/>
    <property type="project" value="UniProtKB-UniRule"/>
</dbReference>
<dbReference type="GO" id="GO:0009056">
    <property type="term" value="P:catabolic process"/>
    <property type="evidence" value="ECO:0007669"/>
    <property type="project" value="UniProtKB-ARBA"/>
</dbReference>
<dbReference type="GO" id="GO:0006631">
    <property type="term" value="P:fatty acid metabolic process"/>
    <property type="evidence" value="ECO:0007669"/>
    <property type="project" value="InterPro"/>
</dbReference>
<dbReference type="Gene3D" id="1.10.1040.10">
    <property type="entry name" value="N-(1-d-carboxylethyl)-l-norvaline Dehydrogenase, domain 2"/>
    <property type="match status" value="1"/>
</dbReference>
<dbReference type="Gene3D" id="3.40.50.720">
    <property type="entry name" value="NAD(P)-binding Rossmann-like Domain"/>
    <property type="match status" value="1"/>
</dbReference>
<dbReference type="HAMAP" id="MF_02129">
    <property type="entry name" value="L_carnitine_dehydrog"/>
    <property type="match status" value="1"/>
</dbReference>
<dbReference type="InterPro" id="IPR006176">
    <property type="entry name" value="3-OHacyl-CoA_DH_NAD-bd"/>
</dbReference>
<dbReference type="InterPro" id="IPR006108">
    <property type="entry name" value="3HC_DH_C"/>
</dbReference>
<dbReference type="InterPro" id="IPR008927">
    <property type="entry name" value="6-PGluconate_DH-like_C_sf"/>
</dbReference>
<dbReference type="InterPro" id="IPR013328">
    <property type="entry name" value="6PGD_dom2"/>
</dbReference>
<dbReference type="InterPro" id="IPR026578">
    <property type="entry name" value="L-carnitine_dehydrogenase"/>
</dbReference>
<dbReference type="InterPro" id="IPR036291">
    <property type="entry name" value="NAD(P)-bd_dom_sf"/>
</dbReference>
<dbReference type="PANTHER" id="PTHR48075">
    <property type="entry name" value="3-HYDROXYACYL-COA DEHYDROGENASE FAMILY PROTEIN"/>
    <property type="match status" value="1"/>
</dbReference>
<dbReference type="PANTHER" id="PTHR48075:SF5">
    <property type="entry name" value="3-HYDROXYBUTYRYL-COA DEHYDROGENASE"/>
    <property type="match status" value="1"/>
</dbReference>
<dbReference type="Pfam" id="PF00725">
    <property type="entry name" value="3HCDH"/>
    <property type="match status" value="1"/>
</dbReference>
<dbReference type="Pfam" id="PF02737">
    <property type="entry name" value="3HCDH_N"/>
    <property type="match status" value="1"/>
</dbReference>
<dbReference type="SUPFAM" id="SSF48179">
    <property type="entry name" value="6-phosphogluconate dehydrogenase C-terminal domain-like"/>
    <property type="match status" value="1"/>
</dbReference>
<dbReference type="SUPFAM" id="SSF51735">
    <property type="entry name" value="NAD(P)-binding Rossmann-fold domains"/>
    <property type="match status" value="1"/>
</dbReference>
<protein>
    <recommendedName>
        <fullName evidence="1">L-carnitine dehydrogenase</fullName>
        <shortName evidence="1">CDH</shortName>
        <shortName evidence="1">L-CDH</shortName>
        <ecNumber evidence="1">1.1.1.108</ecNumber>
    </recommendedName>
</protein>
<reference key="1">
    <citation type="journal article" date="2003" name="Mol. Microbiol.">
        <title>Genome-based analysis of virulence genes in a non-biofilm-forming Staphylococcus epidermidis strain (ATCC 12228).</title>
        <authorList>
            <person name="Zhang Y.-Q."/>
            <person name="Ren S.-X."/>
            <person name="Li H.-L."/>
            <person name="Wang Y.-X."/>
            <person name="Fu G."/>
            <person name="Yang J."/>
            <person name="Qin Z.-Q."/>
            <person name="Miao Y.-G."/>
            <person name="Wang W.-Y."/>
            <person name="Chen R.-S."/>
            <person name="Shen Y."/>
            <person name="Chen Z."/>
            <person name="Yuan Z.-H."/>
            <person name="Zhao G.-P."/>
            <person name="Qu D."/>
            <person name="Danchin A."/>
            <person name="Wen Y.-M."/>
        </authorList>
    </citation>
    <scope>NUCLEOTIDE SEQUENCE [LARGE SCALE GENOMIC DNA]</scope>
    <source>
        <strain>ATCC 12228 / FDA PCI 1200</strain>
    </source>
</reference>
<organism>
    <name type="scientific">Staphylococcus epidermidis (strain ATCC 12228 / FDA PCI 1200)</name>
    <dbReference type="NCBI Taxonomy" id="176280"/>
    <lineage>
        <taxon>Bacteria</taxon>
        <taxon>Bacillati</taxon>
        <taxon>Bacillota</taxon>
        <taxon>Bacilli</taxon>
        <taxon>Bacillales</taxon>
        <taxon>Staphylococcaceae</taxon>
        <taxon>Staphylococcus</taxon>
    </lineage>
</organism>
<feature type="chain" id="PRO_0000417908" description="L-carnitine dehydrogenase">
    <location>
        <begin position="1"/>
        <end position="321"/>
    </location>
</feature>
<feature type="binding site" evidence="1">
    <location>
        <begin position="7"/>
        <end position="12"/>
    </location>
    <ligand>
        <name>NAD(+)</name>
        <dbReference type="ChEBI" id="CHEBI:57540"/>
    </ligand>
</feature>
<evidence type="ECO:0000255" key="1">
    <source>
        <dbReference type="HAMAP-Rule" id="MF_02129"/>
    </source>
</evidence>
<evidence type="ECO:0000312" key="2">
    <source>
        <dbReference type="EMBL" id="AAO03817.1"/>
    </source>
</evidence>
<comment type="function">
    <text evidence="1">Catalyzes the NAD(+)-dependent oxidation of L-carnitine to 3-dehydrocarnitine.</text>
</comment>
<comment type="catalytic activity">
    <reaction evidence="1">
        <text>carnitine + NAD(+) = 3-dehydrocarnitine + NADH + H(+)</text>
        <dbReference type="Rhea" id="RHEA:19265"/>
        <dbReference type="ChEBI" id="CHEBI:15378"/>
        <dbReference type="ChEBI" id="CHEBI:17126"/>
        <dbReference type="ChEBI" id="CHEBI:57540"/>
        <dbReference type="ChEBI" id="CHEBI:57885"/>
        <dbReference type="ChEBI" id="CHEBI:57945"/>
        <dbReference type="EC" id="1.1.1.108"/>
    </reaction>
</comment>
<comment type="pathway">
    <text evidence="1">Amine and polyamine metabolism; carnitine metabolism.</text>
</comment>
<comment type="subunit">
    <text evidence="1">Homodimer.</text>
</comment>
<comment type="subcellular location">
    <subcellularLocation>
        <location evidence="1">Cytoplasm</location>
    </subcellularLocation>
</comment>
<comment type="similarity">
    <text evidence="1">Belongs to the 3-hydroxyacyl-CoA dehydrogenase family. L-carnitine dehydrogenase subfamily.</text>
</comment>
<sequence>MKFAVVGTGVIGSGWITRMLAHGHEVIATDPSEGAYERMLTQVKQNWPYAEQMGLAENASIQNLTFTPHLEEAVKDADHIQENVPEVEEIKDAVLKEIDFYAKPEATIGSSTSGIMPSELQANLSHPERLVVAHPFHPVYILPLVEIVPGKQTSEETTVKAEQIYESIGMDVLHVRHEIEGHIADRLMEALWRESLHIVNDGIATTEEVDKAFTHAAGLRYAQYGPFMTFHLAGGEGGMRHMLKQFGPALKKPWTKLIAPELTDDLYHKVVSGSEASSQGYTMSELDQKRNEFLIKVKELAEQYWPSDSKAMKKSNGAELQ</sequence>
<keyword id="KW-0963">Cytoplasm</keyword>
<keyword id="KW-0520">NAD</keyword>
<keyword id="KW-0560">Oxidoreductase</keyword>
<accession>Q8CQB9</accession>